<keyword id="KW-0030">Aminoacyl-tRNA synthetase</keyword>
<keyword id="KW-0067">ATP-binding</keyword>
<keyword id="KW-0963">Cytoplasm</keyword>
<keyword id="KW-0436">Ligase</keyword>
<keyword id="KW-0547">Nucleotide-binding</keyword>
<keyword id="KW-0648">Protein biosynthesis</keyword>
<keyword id="KW-1185">Reference proteome</keyword>
<proteinExistence type="inferred from homology"/>
<organism>
    <name type="scientific">Prochlorococcus marinus (strain SARG / CCMP1375 / SS120)</name>
    <dbReference type="NCBI Taxonomy" id="167539"/>
    <lineage>
        <taxon>Bacteria</taxon>
        <taxon>Bacillati</taxon>
        <taxon>Cyanobacteriota</taxon>
        <taxon>Cyanophyceae</taxon>
        <taxon>Synechococcales</taxon>
        <taxon>Prochlorococcaceae</taxon>
        <taxon>Prochlorococcus</taxon>
    </lineage>
</organism>
<gene>
    <name evidence="1" type="primary">serS</name>
    <name type="ordered locus">Pro_1304</name>
</gene>
<accession>Q7VAZ8</accession>
<evidence type="ECO:0000255" key="1">
    <source>
        <dbReference type="HAMAP-Rule" id="MF_00176"/>
    </source>
</evidence>
<comment type="function">
    <text evidence="1">Catalyzes the attachment of serine to tRNA(Ser). Is also able to aminoacylate tRNA(Sec) with serine, to form the misacylated tRNA L-seryl-tRNA(Sec), which will be further converted into selenocysteinyl-tRNA(Sec).</text>
</comment>
<comment type="catalytic activity">
    <reaction evidence="1">
        <text>tRNA(Ser) + L-serine + ATP = L-seryl-tRNA(Ser) + AMP + diphosphate + H(+)</text>
        <dbReference type="Rhea" id="RHEA:12292"/>
        <dbReference type="Rhea" id="RHEA-COMP:9669"/>
        <dbReference type="Rhea" id="RHEA-COMP:9703"/>
        <dbReference type="ChEBI" id="CHEBI:15378"/>
        <dbReference type="ChEBI" id="CHEBI:30616"/>
        <dbReference type="ChEBI" id="CHEBI:33019"/>
        <dbReference type="ChEBI" id="CHEBI:33384"/>
        <dbReference type="ChEBI" id="CHEBI:78442"/>
        <dbReference type="ChEBI" id="CHEBI:78533"/>
        <dbReference type="ChEBI" id="CHEBI:456215"/>
        <dbReference type="EC" id="6.1.1.11"/>
    </reaction>
</comment>
<comment type="catalytic activity">
    <reaction evidence="1">
        <text>tRNA(Sec) + L-serine + ATP = L-seryl-tRNA(Sec) + AMP + diphosphate + H(+)</text>
        <dbReference type="Rhea" id="RHEA:42580"/>
        <dbReference type="Rhea" id="RHEA-COMP:9742"/>
        <dbReference type="Rhea" id="RHEA-COMP:10128"/>
        <dbReference type="ChEBI" id="CHEBI:15378"/>
        <dbReference type="ChEBI" id="CHEBI:30616"/>
        <dbReference type="ChEBI" id="CHEBI:33019"/>
        <dbReference type="ChEBI" id="CHEBI:33384"/>
        <dbReference type="ChEBI" id="CHEBI:78442"/>
        <dbReference type="ChEBI" id="CHEBI:78533"/>
        <dbReference type="ChEBI" id="CHEBI:456215"/>
        <dbReference type="EC" id="6.1.1.11"/>
    </reaction>
</comment>
<comment type="pathway">
    <text evidence="1">Aminoacyl-tRNA biosynthesis; selenocysteinyl-tRNA(Sec) biosynthesis; L-seryl-tRNA(Sec) from L-serine and tRNA(Sec): step 1/1.</text>
</comment>
<comment type="subunit">
    <text evidence="1">Homodimer. The tRNA molecule binds across the dimer.</text>
</comment>
<comment type="subcellular location">
    <subcellularLocation>
        <location evidence="1">Cytoplasm</location>
    </subcellularLocation>
</comment>
<comment type="domain">
    <text evidence="1">Consists of two distinct domains, a catalytic core and a N-terminal extension that is involved in tRNA binding.</text>
</comment>
<comment type="similarity">
    <text evidence="1">Belongs to the class-II aminoacyl-tRNA synthetase family. Type-1 seryl-tRNA synthetase subfamily.</text>
</comment>
<protein>
    <recommendedName>
        <fullName evidence="1">Serine--tRNA ligase</fullName>
        <ecNumber evidence="1">6.1.1.11</ecNumber>
    </recommendedName>
    <alternativeName>
        <fullName evidence="1">Seryl-tRNA synthetase</fullName>
        <shortName evidence="1">SerRS</shortName>
    </alternativeName>
    <alternativeName>
        <fullName evidence="1">Seryl-tRNA(Ser/Sec) synthetase</fullName>
    </alternativeName>
</protein>
<name>SYS_PROMA</name>
<sequence length="425" mass="47894">MLDQRKIRENPTLIEKGLARRGLKVNLAPLTEASERLKGLEQHRNSLQAKGNLIGKEVGQKIKSGISPNSEEVVSLRSKGNELKREINVLEEEEKALAKSIRKRILNYPNIPYSECPDGKDENDNLQIRNWGNPLKGEGYKEHWEIAEELGLLDTEKSVRIAKSRFVTLFNHGARLERSLINFMLDIHTSKGYSEVLPPVLVNTASLEGSGQLPKFAEESFKCSEDDLWLTPTAEVPLTSLHRNEVIPFEKLPIKYVAYSPCFRREAGSYGRDTRGLIRLHQFNKVELYWFVEPKKSKEAHQIITADAEAILQKLELPYRVVELCSGDLGFSASCTYDLEVWLPGANSYREISSCSNCDDFQARRSFIRTKKGNQTQLVHTLNASGLAIGRTMAAILENGQQSDGTVKLPKALVPYFGENQLTPQ</sequence>
<dbReference type="EC" id="6.1.1.11" evidence="1"/>
<dbReference type="EMBL" id="AE017126">
    <property type="protein sequence ID" value="AAQ00348.1"/>
    <property type="molecule type" value="Genomic_DNA"/>
</dbReference>
<dbReference type="RefSeq" id="NP_875695.1">
    <property type="nucleotide sequence ID" value="NC_005042.1"/>
</dbReference>
<dbReference type="RefSeq" id="WP_011125455.1">
    <property type="nucleotide sequence ID" value="NC_005042.1"/>
</dbReference>
<dbReference type="SMR" id="Q7VAZ8"/>
<dbReference type="STRING" id="167539.Pro_1304"/>
<dbReference type="EnsemblBacteria" id="AAQ00348">
    <property type="protein sequence ID" value="AAQ00348"/>
    <property type="gene ID" value="Pro_1304"/>
</dbReference>
<dbReference type="KEGG" id="pma:Pro_1304"/>
<dbReference type="PATRIC" id="fig|167539.5.peg.1369"/>
<dbReference type="eggNOG" id="COG0172">
    <property type="taxonomic scope" value="Bacteria"/>
</dbReference>
<dbReference type="HOGENOM" id="CLU_023797_1_1_3"/>
<dbReference type="OrthoDB" id="9804647at2"/>
<dbReference type="UniPathway" id="UPA00906">
    <property type="reaction ID" value="UER00895"/>
</dbReference>
<dbReference type="Proteomes" id="UP000001420">
    <property type="component" value="Chromosome"/>
</dbReference>
<dbReference type="GO" id="GO:0005737">
    <property type="term" value="C:cytoplasm"/>
    <property type="evidence" value="ECO:0007669"/>
    <property type="project" value="UniProtKB-SubCell"/>
</dbReference>
<dbReference type="GO" id="GO:0005524">
    <property type="term" value="F:ATP binding"/>
    <property type="evidence" value="ECO:0007669"/>
    <property type="project" value="UniProtKB-UniRule"/>
</dbReference>
<dbReference type="GO" id="GO:0004828">
    <property type="term" value="F:serine-tRNA ligase activity"/>
    <property type="evidence" value="ECO:0007669"/>
    <property type="project" value="UniProtKB-UniRule"/>
</dbReference>
<dbReference type="GO" id="GO:0016260">
    <property type="term" value="P:selenocysteine biosynthetic process"/>
    <property type="evidence" value="ECO:0007669"/>
    <property type="project" value="UniProtKB-UniRule"/>
</dbReference>
<dbReference type="GO" id="GO:0006434">
    <property type="term" value="P:seryl-tRNA aminoacylation"/>
    <property type="evidence" value="ECO:0007669"/>
    <property type="project" value="UniProtKB-UniRule"/>
</dbReference>
<dbReference type="CDD" id="cd00770">
    <property type="entry name" value="SerRS_core"/>
    <property type="match status" value="1"/>
</dbReference>
<dbReference type="Gene3D" id="3.30.930.10">
    <property type="entry name" value="Bira Bifunctional Protein, Domain 2"/>
    <property type="match status" value="1"/>
</dbReference>
<dbReference type="Gene3D" id="1.10.287.40">
    <property type="entry name" value="Serine-tRNA synthetase, tRNA binding domain"/>
    <property type="match status" value="1"/>
</dbReference>
<dbReference type="HAMAP" id="MF_00176">
    <property type="entry name" value="Ser_tRNA_synth_type1"/>
    <property type="match status" value="1"/>
</dbReference>
<dbReference type="InterPro" id="IPR002314">
    <property type="entry name" value="aa-tRNA-synt_IIb"/>
</dbReference>
<dbReference type="InterPro" id="IPR006195">
    <property type="entry name" value="aa-tRNA-synth_II"/>
</dbReference>
<dbReference type="InterPro" id="IPR045864">
    <property type="entry name" value="aa-tRNA-synth_II/BPL/LPL"/>
</dbReference>
<dbReference type="InterPro" id="IPR002317">
    <property type="entry name" value="Ser-tRNA-ligase_type_1"/>
</dbReference>
<dbReference type="InterPro" id="IPR015866">
    <property type="entry name" value="Ser-tRNA-synth_1_N"/>
</dbReference>
<dbReference type="InterPro" id="IPR042103">
    <property type="entry name" value="SerRS_1_N_sf"/>
</dbReference>
<dbReference type="InterPro" id="IPR033729">
    <property type="entry name" value="SerRS_core"/>
</dbReference>
<dbReference type="InterPro" id="IPR010978">
    <property type="entry name" value="tRNA-bd_arm"/>
</dbReference>
<dbReference type="NCBIfam" id="TIGR00414">
    <property type="entry name" value="serS"/>
    <property type="match status" value="1"/>
</dbReference>
<dbReference type="PANTHER" id="PTHR43697:SF1">
    <property type="entry name" value="SERINE--TRNA LIGASE"/>
    <property type="match status" value="1"/>
</dbReference>
<dbReference type="PANTHER" id="PTHR43697">
    <property type="entry name" value="SERYL-TRNA SYNTHETASE"/>
    <property type="match status" value="1"/>
</dbReference>
<dbReference type="Pfam" id="PF02403">
    <property type="entry name" value="Seryl_tRNA_N"/>
    <property type="match status" value="1"/>
</dbReference>
<dbReference type="Pfam" id="PF00587">
    <property type="entry name" value="tRNA-synt_2b"/>
    <property type="match status" value="1"/>
</dbReference>
<dbReference type="PIRSF" id="PIRSF001529">
    <property type="entry name" value="Ser-tRNA-synth_IIa"/>
    <property type="match status" value="1"/>
</dbReference>
<dbReference type="PRINTS" id="PR00981">
    <property type="entry name" value="TRNASYNTHSER"/>
</dbReference>
<dbReference type="SUPFAM" id="SSF55681">
    <property type="entry name" value="Class II aaRS and biotin synthetases"/>
    <property type="match status" value="1"/>
</dbReference>
<dbReference type="SUPFAM" id="SSF46589">
    <property type="entry name" value="tRNA-binding arm"/>
    <property type="match status" value="1"/>
</dbReference>
<dbReference type="PROSITE" id="PS50862">
    <property type="entry name" value="AA_TRNA_LIGASE_II"/>
    <property type="match status" value="1"/>
</dbReference>
<reference key="1">
    <citation type="journal article" date="2003" name="Proc. Natl. Acad. Sci. U.S.A.">
        <title>Genome sequence of the cyanobacterium Prochlorococcus marinus SS120, a nearly minimal oxyphototrophic genome.</title>
        <authorList>
            <person name="Dufresne A."/>
            <person name="Salanoubat M."/>
            <person name="Partensky F."/>
            <person name="Artiguenave F."/>
            <person name="Axmann I.M."/>
            <person name="Barbe V."/>
            <person name="Duprat S."/>
            <person name="Galperin M.Y."/>
            <person name="Koonin E.V."/>
            <person name="Le Gall F."/>
            <person name="Makarova K.S."/>
            <person name="Ostrowski M."/>
            <person name="Oztas S."/>
            <person name="Robert C."/>
            <person name="Rogozin I.B."/>
            <person name="Scanlan D.J."/>
            <person name="Tandeau de Marsac N."/>
            <person name="Weissenbach J."/>
            <person name="Wincker P."/>
            <person name="Wolf Y.I."/>
            <person name="Hess W.R."/>
        </authorList>
    </citation>
    <scope>NUCLEOTIDE SEQUENCE [LARGE SCALE GENOMIC DNA]</scope>
    <source>
        <strain>SARG / CCMP1375 / SS120</strain>
    </source>
</reference>
<feature type="chain" id="PRO_0000122098" description="Serine--tRNA ligase">
    <location>
        <begin position="1"/>
        <end position="425"/>
    </location>
</feature>
<feature type="binding site" evidence="1">
    <location>
        <begin position="233"/>
        <end position="235"/>
    </location>
    <ligand>
        <name>L-serine</name>
        <dbReference type="ChEBI" id="CHEBI:33384"/>
    </ligand>
</feature>
<feature type="binding site" evidence="1">
    <location>
        <begin position="264"/>
        <end position="266"/>
    </location>
    <ligand>
        <name>ATP</name>
        <dbReference type="ChEBI" id="CHEBI:30616"/>
    </ligand>
</feature>
<feature type="binding site" evidence="1">
    <location>
        <position position="287"/>
    </location>
    <ligand>
        <name>L-serine</name>
        <dbReference type="ChEBI" id="CHEBI:33384"/>
    </ligand>
</feature>
<feature type="binding site" evidence="1">
    <location>
        <begin position="351"/>
        <end position="354"/>
    </location>
    <ligand>
        <name>ATP</name>
        <dbReference type="ChEBI" id="CHEBI:30616"/>
    </ligand>
</feature>
<feature type="binding site" evidence="1">
    <location>
        <position position="385"/>
    </location>
    <ligand>
        <name>L-serine</name>
        <dbReference type="ChEBI" id="CHEBI:33384"/>
    </ligand>
</feature>